<gene>
    <name evidence="1" type="primary">rplW</name>
    <name type="ordered locus">cgR_0610</name>
</gene>
<organism>
    <name type="scientific">Corynebacterium glutamicum (strain R)</name>
    <dbReference type="NCBI Taxonomy" id="340322"/>
    <lineage>
        <taxon>Bacteria</taxon>
        <taxon>Bacillati</taxon>
        <taxon>Actinomycetota</taxon>
        <taxon>Actinomycetes</taxon>
        <taxon>Mycobacteriales</taxon>
        <taxon>Corynebacteriaceae</taxon>
        <taxon>Corynebacterium</taxon>
    </lineage>
</organism>
<keyword id="KW-0687">Ribonucleoprotein</keyword>
<keyword id="KW-0689">Ribosomal protein</keyword>
<keyword id="KW-0694">RNA-binding</keyword>
<keyword id="KW-0699">rRNA-binding</keyword>
<reference key="1">
    <citation type="journal article" date="2007" name="Microbiology">
        <title>Comparative analysis of the Corynebacterium glutamicum group and complete genome sequence of strain R.</title>
        <authorList>
            <person name="Yukawa H."/>
            <person name="Omumasaba C.A."/>
            <person name="Nonaka H."/>
            <person name="Kos P."/>
            <person name="Okai N."/>
            <person name="Suzuki N."/>
            <person name="Suda M."/>
            <person name="Tsuge Y."/>
            <person name="Watanabe J."/>
            <person name="Ikeda Y."/>
            <person name="Vertes A.A."/>
            <person name="Inui M."/>
        </authorList>
    </citation>
    <scope>NUCLEOTIDE SEQUENCE [LARGE SCALE GENOMIC DNA]</scope>
    <source>
        <strain>R</strain>
    </source>
</reference>
<protein>
    <recommendedName>
        <fullName evidence="1">Large ribosomal subunit protein uL23</fullName>
    </recommendedName>
    <alternativeName>
        <fullName evidence="2">50S ribosomal protein L23</fullName>
    </alternativeName>
</protein>
<feature type="chain" id="PRO_1000068070" description="Large ribosomal subunit protein uL23">
    <location>
        <begin position="1"/>
        <end position="101"/>
    </location>
</feature>
<evidence type="ECO:0000255" key="1">
    <source>
        <dbReference type="HAMAP-Rule" id="MF_01369"/>
    </source>
</evidence>
<evidence type="ECO:0000305" key="2"/>
<sequence length="101" mass="11088">MATIANPRDIIIAPVVSEKSYGLMEQNVYTFFVSTDANKTQIKIAIEEIFGVKVASVNTVNRAGKRKRSRTGFGTRKATKRAYVTLREGSDSIDIFNGSVA</sequence>
<name>RL23_CORGB</name>
<proteinExistence type="inferred from homology"/>
<comment type="function">
    <text evidence="1">One of the early assembly proteins it binds 23S rRNA. One of the proteins that surrounds the polypeptide exit tunnel on the outside of the ribosome. Forms the main docking site for trigger factor binding to the ribosome.</text>
</comment>
<comment type="subunit">
    <text evidence="1">Part of the 50S ribosomal subunit. Contacts protein L29, and trigger factor when it is bound to the ribosome.</text>
</comment>
<comment type="similarity">
    <text evidence="1">Belongs to the universal ribosomal protein uL23 family.</text>
</comment>
<accession>A4QBI2</accession>
<dbReference type="EMBL" id="AP009044">
    <property type="protein sequence ID" value="BAF53579.1"/>
    <property type="molecule type" value="Genomic_DNA"/>
</dbReference>
<dbReference type="RefSeq" id="WP_003854294.1">
    <property type="nucleotide sequence ID" value="NC_009342.1"/>
</dbReference>
<dbReference type="SMR" id="A4QBI2"/>
<dbReference type="GeneID" id="1021512"/>
<dbReference type="KEGG" id="cgt:cgR_0610"/>
<dbReference type="HOGENOM" id="CLU_037562_3_2_11"/>
<dbReference type="PhylomeDB" id="A4QBI2"/>
<dbReference type="Proteomes" id="UP000006698">
    <property type="component" value="Chromosome"/>
</dbReference>
<dbReference type="GO" id="GO:1990904">
    <property type="term" value="C:ribonucleoprotein complex"/>
    <property type="evidence" value="ECO:0007669"/>
    <property type="project" value="UniProtKB-KW"/>
</dbReference>
<dbReference type="GO" id="GO:0005840">
    <property type="term" value="C:ribosome"/>
    <property type="evidence" value="ECO:0007669"/>
    <property type="project" value="UniProtKB-KW"/>
</dbReference>
<dbReference type="GO" id="GO:0019843">
    <property type="term" value="F:rRNA binding"/>
    <property type="evidence" value="ECO:0007669"/>
    <property type="project" value="UniProtKB-UniRule"/>
</dbReference>
<dbReference type="GO" id="GO:0003735">
    <property type="term" value="F:structural constituent of ribosome"/>
    <property type="evidence" value="ECO:0007669"/>
    <property type="project" value="InterPro"/>
</dbReference>
<dbReference type="GO" id="GO:0006412">
    <property type="term" value="P:translation"/>
    <property type="evidence" value="ECO:0007669"/>
    <property type="project" value="UniProtKB-UniRule"/>
</dbReference>
<dbReference type="FunFam" id="3.30.70.330:FF:000001">
    <property type="entry name" value="50S ribosomal protein L23"/>
    <property type="match status" value="1"/>
</dbReference>
<dbReference type="Gene3D" id="3.30.70.330">
    <property type="match status" value="1"/>
</dbReference>
<dbReference type="HAMAP" id="MF_01369_B">
    <property type="entry name" value="Ribosomal_uL23_B"/>
    <property type="match status" value="1"/>
</dbReference>
<dbReference type="InterPro" id="IPR012677">
    <property type="entry name" value="Nucleotide-bd_a/b_plait_sf"/>
</dbReference>
<dbReference type="InterPro" id="IPR013025">
    <property type="entry name" value="Ribosomal_uL23-like"/>
</dbReference>
<dbReference type="InterPro" id="IPR012678">
    <property type="entry name" value="Ribosomal_uL23/eL15/eS24_sf"/>
</dbReference>
<dbReference type="NCBIfam" id="NF004363">
    <property type="entry name" value="PRK05738.2-4"/>
    <property type="match status" value="1"/>
</dbReference>
<dbReference type="NCBIfam" id="NF004364">
    <property type="entry name" value="PRK05738.2-5"/>
    <property type="match status" value="1"/>
</dbReference>
<dbReference type="PANTHER" id="PTHR11620">
    <property type="entry name" value="60S RIBOSOMAL PROTEIN L23A"/>
    <property type="match status" value="1"/>
</dbReference>
<dbReference type="Pfam" id="PF00276">
    <property type="entry name" value="Ribosomal_L23"/>
    <property type="match status" value="1"/>
</dbReference>
<dbReference type="SUPFAM" id="SSF54189">
    <property type="entry name" value="Ribosomal proteins S24e, L23 and L15e"/>
    <property type="match status" value="1"/>
</dbReference>